<evidence type="ECO:0000250" key="1"/>
<evidence type="ECO:0000305" key="2"/>
<proteinExistence type="inferred from homology"/>
<reference key="1">
    <citation type="journal article" date="1999" name="Genetics">
        <title>Divergence of the hyperthermophilic archaea Pyrococcus furiosus and P. horikoshii inferred from complete genomic sequences.</title>
        <authorList>
            <person name="Maeder D.L."/>
            <person name="Weiss R.B."/>
            <person name="Dunn D.M."/>
            <person name="Cherry J.L."/>
            <person name="Gonzalez J.M."/>
            <person name="DiRuggiero J."/>
            <person name="Robb F.T."/>
        </authorList>
    </citation>
    <scope>NUCLEOTIDE SEQUENCE [LARGE SCALE GENOMIC DNA]</scope>
    <source>
        <strain>ATCC 43587 / DSM 3638 / JCM 8422 / Vc1</strain>
    </source>
</reference>
<comment type="function">
    <text evidence="1">Catalyzes the CTP-dependent phosphorylation of riboflavin (vitamin B2) to form flavin mononucleotide (FMN).</text>
</comment>
<comment type="catalytic activity">
    <reaction>
        <text>riboflavin + CTP = CDP + FMN + H(+)</text>
        <dbReference type="Rhea" id="RHEA:25021"/>
        <dbReference type="ChEBI" id="CHEBI:15378"/>
        <dbReference type="ChEBI" id="CHEBI:37563"/>
        <dbReference type="ChEBI" id="CHEBI:57986"/>
        <dbReference type="ChEBI" id="CHEBI:58069"/>
        <dbReference type="ChEBI" id="CHEBI:58210"/>
        <dbReference type="EC" id="2.7.1.161"/>
    </reaction>
</comment>
<comment type="cofactor">
    <cofactor evidence="1">
        <name>Mg(2+)</name>
        <dbReference type="ChEBI" id="CHEBI:18420"/>
    </cofactor>
    <text evidence="1">Binds 1 Mg(2+) ion per subunit.</text>
</comment>
<comment type="pathway">
    <text>Cofactor biosynthesis; FMN biosynthesis; FMN from riboflavin (CTP route): step 1/1.</text>
</comment>
<comment type="similarity">
    <text evidence="2">Belongs to the archaeal riboflavin kinase family.</text>
</comment>
<organism>
    <name type="scientific">Pyrococcus furiosus (strain ATCC 43587 / DSM 3638 / JCM 8422 / Vc1)</name>
    <dbReference type="NCBI Taxonomy" id="186497"/>
    <lineage>
        <taxon>Archaea</taxon>
        <taxon>Methanobacteriati</taxon>
        <taxon>Methanobacteriota</taxon>
        <taxon>Thermococci</taxon>
        <taxon>Thermococcales</taxon>
        <taxon>Thermococcaceae</taxon>
        <taxon>Pyrococcus</taxon>
    </lineage>
</organism>
<name>RIFK_PYRFU</name>
<protein>
    <recommendedName>
        <fullName>Riboflavin kinase</fullName>
        <shortName>RFK</shortName>
        <ecNumber>2.7.1.161</ecNumber>
    </recommendedName>
    <alternativeName>
        <fullName>CTP-dependent riboflavin kinase</fullName>
    </alternativeName>
    <alternativeName>
        <fullName>CTP:riboflavin 5'-phosphotransferase</fullName>
    </alternativeName>
    <alternativeName>
        <fullName>Flavokinase</fullName>
    </alternativeName>
</protein>
<feature type="chain" id="PRO_0000322102" description="Riboflavin kinase">
    <location>
        <begin position="1"/>
        <end position="212"/>
    </location>
</feature>
<feature type="region of interest" description="H-T-H motif-like">
    <location>
        <begin position="1"/>
        <end position="87"/>
    </location>
</feature>
<feature type="region of interest" description="Riboflavin kinase">
    <location>
        <begin position="88"/>
        <end position="212"/>
    </location>
</feature>
<feature type="binding site" evidence="1">
    <location>
        <begin position="97"/>
        <end position="102"/>
    </location>
    <ligand>
        <name>CDP</name>
        <dbReference type="ChEBI" id="CHEBI:58069"/>
    </ligand>
</feature>
<feature type="binding site" evidence="1">
    <location>
        <position position="124"/>
    </location>
    <ligand>
        <name>Mg(2+)</name>
        <dbReference type="ChEBI" id="CHEBI:18420"/>
    </ligand>
</feature>
<feature type="binding site" evidence="1">
    <location>
        <position position="126"/>
    </location>
    <ligand>
        <name>Mg(2+)</name>
        <dbReference type="ChEBI" id="CHEBI:18420"/>
    </ligand>
</feature>
<feature type="binding site" evidence="1">
    <location>
        <position position="180"/>
    </location>
    <ligand>
        <name>FMN</name>
        <dbReference type="ChEBI" id="CHEBI:58210"/>
    </ligand>
</feature>
<feature type="binding site" evidence="1">
    <location>
        <position position="188"/>
    </location>
    <ligand>
        <name>FMN</name>
        <dbReference type="ChEBI" id="CHEBI:58210"/>
    </ligand>
</feature>
<feature type="binding site" evidence="1">
    <location>
        <begin position="193"/>
        <end position="196"/>
    </location>
    <ligand>
        <name>CDP</name>
        <dbReference type="ChEBI" id="CHEBI:58069"/>
    </ligand>
</feature>
<gene>
    <name type="primary">ribK</name>
    <name type="ordered locus">PF0988</name>
</gene>
<accession>Q8U262</accession>
<dbReference type="EC" id="2.7.1.161"/>
<dbReference type="EMBL" id="AE009950">
    <property type="protein sequence ID" value="AAL81112.1"/>
    <property type="molecule type" value="Genomic_DNA"/>
</dbReference>
<dbReference type="RefSeq" id="WP_011012125.1">
    <property type="nucleotide sequence ID" value="NZ_CP023154.1"/>
</dbReference>
<dbReference type="SMR" id="Q8U262"/>
<dbReference type="STRING" id="186497.PF0988"/>
<dbReference type="PaxDb" id="186497-PF0988"/>
<dbReference type="KEGG" id="pfu:PF0988"/>
<dbReference type="PATRIC" id="fig|186497.12.peg.1047"/>
<dbReference type="eggNOG" id="arCOG01904">
    <property type="taxonomic scope" value="Archaea"/>
</dbReference>
<dbReference type="HOGENOM" id="CLU_088476_0_0_2"/>
<dbReference type="OrthoDB" id="30955at2157"/>
<dbReference type="PhylomeDB" id="Q8U262"/>
<dbReference type="UniPathway" id="UPA00276">
    <property type="reaction ID" value="UER00929"/>
</dbReference>
<dbReference type="Proteomes" id="UP000001013">
    <property type="component" value="Chromosome"/>
</dbReference>
<dbReference type="GO" id="GO:0003700">
    <property type="term" value="F:DNA-binding transcription factor activity"/>
    <property type="evidence" value="ECO:0007669"/>
    <property type="project" value="InterPro"/>
</dbReference>
<dbReference type="GO" id="GO:0000287">
    <property type="term" value="F:magnesium ion binding"/>
    <property type="evidence" value="ECO:0007669"/>
    <property type="project" value="UniProtKB-UniRule"/>
</dbReference>
<dbReference type="GO" id="GO:0000166">
    <property type="term" value="F:nucleotide binding"/>
    <property type="evidence" value="ECO:0007669"/>
    <property type="project" value="UniProtKB-UniRule"/>
</dbReference>
<dbReference type="GO" id="GO:0008531">
    <property type="term" value="F:riboflavin kinase activity"/>
    <property type="evidence" value="ECO:0007669"/>
    <property type="project" value="InterPro"/>
</dbReference>
<dbReference type="GO" id="GO:0009398">
    <property type="term" value="P:FMN biosynthetic process"/>
    <property type="evidence" value="ECO:0007669"/>
    <property type="project" value="UniProtKB-UniRule"/>
</dbReference>
<dbReference type="GO" id="GO:0009231">
    <property type="term" value="P:riboflavin biosynthetic process"/>
    <property type="evidence" value="ECO:0007669"/>
    <property type="project" value="InterPro"/>
</dbReference>
<dbReference type="Gene3D" id="2.40.30.30">
    <property type="entry name" value="Riboflavin kinase-like"/>
    <property type="match status" value="1"/>
</dbReference>
<dbReference type="Gene3D" id="1.10.10.10">
    <property type="entry name" value="Winged helix-like DNA-binding domain superfamily/Winged helix DNA-binding domain"/>
    <property type="match status" value="1"/>
</dbReference>
<dbReference type="HAMAP" id="MF_01285">
    <property type="entry name" value="Riboflavin_kinase"/>
    <property type="match status" value="1"/>
</dbReference>
<dbReference type="InterPro" id="IPR000835">
    <property type="entry name" value="HTH_MarR-typ"/>
</dbReference>
<dbReference type="InterPro" id="IPR039063">
    <property type="entry name" value="RibK_CTP-dep"/>
</dbReference>
<dbReference type="InterPro" id="IPR023470">
    <property type="entry name" value="Riboflavin_kinase_archaeal"/>
</dbReference>
<dbReference type="InterPro" id="IPR023602">
    <property type="entry name" value="Riboflavin_kinase_CTP-dep"/>
</dbReference>
<dbReference type="InterPro" id="IPR023465">
    <property type="entry name" value="Riboflavin_kinase_dom_sf"/>
</dbReference>
<dbReference type="InterPro" id="IPR036388">
    <property type="entry name" value="WH-like_DNA-bd_sf"/>
</dbReference>
<dbReference type="InterPro" id="IPR036390">
    <property type="entry name" value="WH_DNA-bd_sf"/>
</dbReference>
<dbReference type="PANTHER" id="PTHR40706">
    <property type="entry name" value="RIBOFLAVIN KINASE"/>
    <property type="match status" value="1"/>
</dbReference>
<dbReference type="PANTHER" id="PTHR40706:SF1">
    <property type="entry name" value="RIBOFLAVIN KINASE"/>
    <property type="match status" value="1"/>
</dbReference>
<dbReference type="Pfam" id="PF01982">
    <property type="entry name" value="CTP-dep_RFKase"/>
    <property type="match status" value="1"/>
</dbReference>
<dbReference type="Pfam" id="PF13551">
    <property type="entry name" value="HTH_29"/>
    <property type="match status" value="1"/>
</dbReference>
<dbReference type="SMART" id="SM00347">
    <property type="entry name" value="HTH_MARR"/>
    <property type="match status" value="1"/>
</dbReference>
<dbReference type="SUPFAM" id="SSF82114">
    <property type="entry name" value="Riboflavin kinase-like"/>
    <property type="match status" value="1"/>
</dbReference>
<dbReference type="SUPFAM" id="SSF46785">
    <property type="entry name" value="Winged helix' DNA-binding domain"/>
    <property type="match status" value="1"/>
</dbReference>
<dbReference type="PROSITE" id="PS50995">
    <property type="entry name" value="HTH_MARR_2"/>
    <property type="match status" value="1"/>
</dbReference>
<keyword id="KW-0285">Flavoprotein</keyword>
<keyword id="KW-0288">FMN</keyword>
<keyword id="KW-0418">Kinase</keyword>
<keyword id="KW-0460">Magnesium</keyword>
<keyword id="KW-0479">Metal-binding</keyword>
<keyword id="KW-0547">Nucleotide-binding</keyword>
<keyword id="KW-1185">Reference proteome</keyword>
<keyword id="KW-0808">Transferase</keyword>
<sequence>MKKSNLDLLILLAKAGGIEKEILTTSRELSKMLNVSPQTIVRWLEDLEKDGLIKKSESRKGTLVTITEEGVKFLEKLHEELSDALYRGIIIGEVVSGIGEGAYYVRQYAPLIREYLGFDPYPGTLNVRVIFPKTIFDALCNVRPIIIPGFTKEGRTFGDVRAYRVKIDNIEGAIVIPSRTIHPPKIAEIIAPVNLRKTLNLKDGDRIRIKTL</sequence>